<reference key="1">
    <citation type="journal article" date="1998" name="Science">
        <title>Genome sequence of the nematode C. elegans: a platform for investigating biology.</title>
        <authorList>
            <consortium name="The C. elegans sequencing consortium"/>
        </authorList>
    </citation>
    <scope>NUCLEOTIDE SEQUENCE [LARGE SCALE GENOMIC DNA]</scope>
    <source>
        <strain>Bristol N2</strain>
    </source>
</reference>
<reference key="2">
    <citation type="journal article" date="2005" name="J. Mol. Evol.">
        <title>Explosive lineage-specific expansion of the orphan nuclear receptor HNF4 in nematodes.</title>
        <authorList>
            <person name="Robinson-Rechavi M."/>
            <person name="Maina C.V."/>
            <person name="Gissendanner C.R."/>
            <person name="Laudet V."/>
            <person name="Sluder A."/>
        </authorList>
    </citation>
    <scope>NUCLEOTIDE SEQUENCE [MRNA] OF 4-457</scope>
</reference>
<keyword id="KW-0238">DNA-binding</keyword>
<keyword id="KW-0479">Metal-binding</keyword>
<keyword id="KW-0539">Nucleus</keyword>
<keyword id="KW-0675">Receptor</keyword>
<keyword id="KW-1185">Reference proteome</keyword>
<keyword id="KW-0804">Transcription</keyword>
<keyword id="KW-0805">Transcription regulation</keyword>
<keyword id="KW-0862">Zinc</keyword>
<keyword id="KW-0863">Zinc-finger</keyword>
<comment type="function">
    <text>Orphan nuclear receptor.</text>
</comment>
<comment type="interaction">
    <interactant intactId="EBI-314918">
        <id>Q09565</id>
    </interactant>
    <interactant intactId="EBI-318820">
        <id>O45666</id>
        <label>nhr-49</label>
    </interactant>
    <organismsDiffer>false</organismsDiffer>
    <experiments>3</experiments>
</comment>
<comment type="subcellular location">
    <subcellularLocation>
        <location evidence="1">Nucleus</location>
    </subcellularLocation>
</comment>
<comment type="similarity">
    <text evidence="4">Belongs to the nuclear hormone receptor family.</text>
</comment>
<dbReference type="EMBL" id="Z46937">
    <property type="protein sequence ID" value="CAA87058.2"/>
    <property type="molecule type" value="Genomic_DNA"/>
</dbReference>
<dbReference type="EMBL" id="AF273771">
    <property type="protein sequence ID" value="AAG15120.1"/>
    <property type="molecule type" value="mRNA"/>
</dbReference>
<dbReference type="PIR" id="T22119">
    <property type="entry name" value="T22119"/>
</dbReference>
<dbReference type="RefSeq" id="NP_497849.1">
    <property type="nucleotide sequence ID" value="NM_065448.7"/>
</dbReference>
<dbReference type="BioGRID" id="40783">
    <property type="interactions" value="10"/>
</dbReference>
<dbReference type="FunCoup" id="Q09565">
    <property type="interactions" value="390"/>
</dbReference>
<dbReference type="IntAct" id="Q09565">
    <property type="interactions" value="9"/>
</dbReference>
<dbReference type="STRING" id="6239.F43C1.4.1"/>
<dbReference type="PaxDb" id="6239-F43C1.4"/>
<dbReference type="EnsemblMetazoa" id="F43C1.4.1">
    <property type="protein sequence ID" value="F43C1.4.1"/>
    <property type="gene ID" value="WBGene00003619"/>
</dbReference>
<dbReference type="GeneID" id="175546"/>
<dbReference type="KEGG" id="cel:CELE_F43C1.4"/>
<dbReference type="UCSC" id="F43C1.4.1">
    <property type="organism name" value="c. elegans"/>
</dbReference>
<dbReference type="AGR" id="WB:WBGene00003619"/>
<dbReference type="CTD" id="175546"/>
<dbReference type="WormBase" id="F43C1.4">
    <property type="protein sequence ID" value="CE28025"/>
    <property type="gene ID" value="WBGene00003619"/>
    <property type="gene designation" value="nhr-20"/>
</dbReference>
<dbReference type="eggNOG" id="KOG3575">
    <property type="taxonomic scope" value="Eukaryota"/>
</dbReference>
<dbReference type="HOGENOM" id="CLU_007368_17_0_1"/>
<dbReference type="InParanoid" id="Q09565"/>
<dbReference type="OMA" id="LDIAWIT"/>
<dbReference type="OrthoDB" id="5855496at2759"/>
<dbReference type="PhylomeDB" id="Q09565"/>
<dbReference type="SignaLink" id="Q09565"/>
<dbReference type="PRO" id="PR:Q09565"/>
<dbReference type="Proteomes" id="UP000001940">
    <property type="component" value="Chromosome III"/>
</dbReference>
<dbReference type="Bgee" id="WBGene00003619">
    <property type="expression patterns" value="Expressed in pharyngeal muscle cell (C elegans) and 4 other cell types or tissues"/>
</dbReference>
<dbReference type="GO" id="GO:0005634">
    <property type="term" value="C:nucleus"/>
    <property type="evidence" value="ECO:0007669"/>
    <property type="project" value="UniProtKB-SubCell"/>
</dbReference>
<dbReference type="GO" id="GO:0003700">
    <property type="term" value="F:DNA-binding transcription factor activity"/>
    <property type="evidence" value="ECO:0007669"/>
    <property type="project" value="InterPro"/>
</dbReference>
<dbReference type="GO" id="GO:0000978">
    <property type="term" value="F:RNA polymerase II cis-regulatory region sequence-specific DNA binding"/>
    <property type="evidence" value="ECO:0007669"/>
    <property type="project" value="InterPro"/>
</dbReference>
<dbReference type="GO" id="GO:0008270">
    <property type="term" value="F:zinc ion binding"/>
    <property type="evidence" value="ECO:0007669"/>
    <property type="project" value="UniProtKB-KW"/>
</dbReference>
<dbReference type="CDD" id="cd06960">
    <property type="entry name" value="NR_DBD_HNF4A"/>
    <property type="match status" value="1"/>
</dbReference>
<dbReference type="CDD" id="cd06157">
    <property type="entry name" value="NR_LBD"/>
    <property type="match status" value="1"/>
</dbReference>
<dbReference type="Gene3D" id="3.30.50.10">
    <property type="entry name" value="Erythroid Transcription Factor GATA-1, subunit A"/>
    <property type="match status" value="1"/>
</dbReference>
<dbReference type="Gene3D" id="1.10.565.10">
    <property type="entry name" value="Retinoid X Receptor"/>
    <property type="match status" value="1"/>
</dbReference>
<dbReference type="InterPro" id="IPR049636">
    <property type="entry name" value="HNF4-like_DBD"/>
</dbReference>
<dbReference type="InterPro" id="IPR035500">
    <property type="entry name" value="NHR-like_dom_sf"/>
</dbReference>
<dbReference type="InterPro" id="IPR000536">
    <property type="entry name" value="Nucl_hrmn_rcpt_lig-bd"/>
</dbReference>
<dbReference type="InterPro" id="IPR001628">
    <property type="entry name" value="Znf_hrmn_rcpt"/>
</dbReference>
<dbReference type="InterPro" id="IPR013088">
    <property type="entry name" value="Znf_NHR/GATA"/>
</dbReference>
<dbReference type="PANTHER" id="PTHR46397:SF5">
    <property type="entry name" value="NUCLEAR HORMONE RECEPTOR FAMILY MEMBER NHR-20"/>
    <property type="match status" value="1"/>
</dbReference>
<dbReference type="PANTHER" id="PTHR46397">
    <property type="entry name" value="NUCLEAR HORMONE RECEPTOR FAMILY-RELATED"/>
    <property type="match status" value="1"/>
</dbReference>
<dbReference type="Pfam" id="PF00104">
    <property type="entry name" value="Hormone_recep"/>
    <property type="match status" value="1"/>
</dbReference>
<dbReference type="Pfam" id="PF00105">
    <property type="entry name" value="zf-C4"/>
    <property type="match status" value="1"/>
</dbReference>
<dbReference type="PRINTS" id="PR00047">
    <property type="entry name" value="STROIDFINGER"/>
</dbReference>
<dbReference type="SMART" id="SM00430">
    <property type="entry name" value="HOLI"/>
    <property type="match status" value="1"/>
</dbReference>
<dbReference type="SMART" id="SM00399">
    <property type="entry name" value="ZnF_C4"/>
    <property type="match status" value="1"/>
</dbReference>
<dbReference type="SUPFAM" id="SSF57716">
    <property type="entry name" value="Glucocorticoid receptor-like (DNA-binding domain)"/>
    <property type="match status" value="1"/>
</dbReference>
<dbReference type="SUPFAM" id="SSF48508">
    <property type="entry name" value="Nuclear receptor ligand-binding domain"/>
    <property type="match status" value="1"/>
</dbReference>
<dbReference type="PROSITE" id="PS51843">
    <property type="entry name" value="NR_LBD"/>
    <property type="match status" value="1"/>
</dbReference>
<dbReference type="PROSITE" id="PS00031">
    <property type="entry name" value="NUCLEAR_REC_DBD_1"/>
    <property type="match status" value="1"/>
</dbReference>
<dbReference type="PROSITE" id="PS51030">
    <property type="entry name" value="NUCLEAR_REC_DBD_2"/>
    <property type="match status" value="1"/>
</dbReference>
<accession>Q09565</accession>
<accession>Q9GTI6</accession>
<proteinExistence type="evidence at protein level"/>
<sequence length="457" mass="52030">MKQERSSGGYSGIPPTSKCLVCEHPDGGSAHFGSTSCLACAAFFRRTVSLNIQFQCKKDKNCVIFHELRMICRACRFDKCVKAGMRRECVQKRRSNKKIPKKHMNMLREDQIKMEYDECKFECSGDQTDDNSPLSIEKKSPPGLLPNDSPMMADFKFDPSDIPSTSGGSTQRLERSPSPKLAESKILSMNGEELLRFYVDQLKNSMDRRRMIFTDTALLAVIDDRGDVPFDATEPPPHSLKRQYESQRFDNLLAFDFCKCCPGFDFLSRVEKAIFFRSCSLAYCLLDIAWITVQAYPEEAAEPVLMYTDGSVCTVNNLSYGWDDEEDICAHDKKKLFLGFLGRFNDAICRPIRNLKMTHVEFAALKALCIWKLGYCEFTPSMKVIGKEHEEALLNGLHNYYDDLYGNPDETGMRIGNLILLMGTVFEMNQLIMETYKSAELFELFKLDALSKSLLTL</sequence>
<name>NHR20_CAEEL</name>
<protein>
    <recommendedName>
        <fullName>Nuclear hormone receptor family member nhr-20</fullName>
    </recommendedName>
</protein>
<feature type="chain" id="PRO_0000053771" description="Nuclear hormone receptor family member nhr-20">
    <location>
        <begin position="1"/>
        <end position="457"/>
    </location>
</feature>
<feature type="domain" description="NR LBD" evidence="2">
    <location>
        <begin position="201"/>
        <end position="457"/>
    </location>
</feature>
<feature type="DNA-binding region" description="Nuclear receptor" evidence="1">
    <location>
        <begin position="16"/>
        <end position="92"/>
    </location>
</feature>
<feature type="zinc finger region" description="NR C4-type" evidence="1">
    <location>
        <begin position="19"/>
        <end position="40"/>
    </location>
</feature>
<feature type="zinc finger region" description="NR C4-type" evidence="1">
    <location>
        <begin position="56"/>
        <end position="80"/>
    </location>
</feature>
<feature type="region of interest" description="Disordered" evidence="3">
    <location>
        <begin position="125"/>
        <end position="182"/>
    </location>
</feature>
<feature type="compositionally biased region" description="Polar residues" evidence="3">
    <location>
        <begin position="162"/>
        <end position="171"/>
    </location>
</feature>
<gene>
    <name type="primary">nhr-20</name>
    <name type="ORF">F43C1.4</name>
</gene>
<organism>
    <name type="scientific">Caenorhabditis elegans</name>
    <dbReference type="NCBI Taxonomy" id="6239"/>
    <lineage>
        <taxon>Eukaryota</taxon>
        <taxon>Metazoa</taxon>
        <taxon>Ecdysozoa</taxon>
        <taxon>Nematoda</taxon>
        <taxon>Chromadorea</taxon>
        <taxon>Rhabditida</taxon>
        <taxon>Rhabditina</taxon>
        <taxon>Rhabditomorpha</taxon>
        <taxon>Rhabditoidea</taxon>
        <taxon>Rhabditidae</taxon>
        <taxon>Peloderinae</taxon>
        <taxon>Caenorhabditis</taxon>
    </lineage>
</organism>
<evidence type="ECO:0000255" key="1">
    <source>
        <dbReference type="PROSITE-ProRule" id="PRU00407"/>
    </source>
</evidence>
<evidence type="ECO:0000255" key="2">
    <source>
        <dbReference type="PROSITE-ProRule" id="PRU01189"/>
    </source>
</evidence>
<evidence type="ECO:0000256" key="3">
    <source>
        <dbReference type="SAM" id="MobiDB-lite"/>
    </source>
</evidence>
<evidence type="ECO:0000305" key="4"/>